<sequence length="334" mass="37690">MTRILDNDLMGDEELIERTLRPQYLKEYIGQDKVKNQLSIFIEAAKLRDESLDHVLLFGPPGLGKTTMAFVIANELGVNLKQTSGPAIEKAGDLVAILNDLEPGDVLFIDEIHRMPMAVEEVLYSAMEDFYIDIMIGAGDTSRSVHLELPPFTLIGATTRAGMLSNPLRARFGITGHMEYYQVDDLTEIVERTSDIFEMAIVHEAALELAKRSRGTPRIANRLLKRVRDYAQIMGDGVITKEMTDKALEMLDVDHEGLDYVDQKILRTMIEMYNGGPVGLGTLSVNIAEERDTVEDMYEPYLIQKGFIMRTRTGRVATEKAYRHLKYPLDTKTE</sequence>
<evidence type="ECO:0000255" key="1">
    <source>
        <dbReference type="HAMAP-Rule" id="MF_00016"/>
    </source>
</evidence>
<reference key="1">
    <citation type="journal article" date="2009" name="BMC Genomics">
        <title>Evidence for niche adaptation in the genome of the bovine pathogen Streptococcus uberis.</title>
        <authorList>
            <person name="Ward P.N."/>
            <person name="Holden M.T.G."/>
            <person name="Leigh J.A."/>
            <person name="Lennard N."/>
            <person name="Bignell A."/>
            <person name="Barron A."/>
            <person name="Clark L."/>
            <person name="Quail M.A."/>
            <person name="Woodward J."/>
            <person name="Barrell B.G."/>
            <person name="Egan S.A."/>
            <person name="Field T.R."/>
            <person name="Maskell D."/>
            <person name="Kehoe M."/>
            <person name="Dowson C.G."/>
            <person name="Chanter N."/>
            <person name="Whatmore A.M."/>
            <person name="Bentley S.D."/>
            <person name="Parkhill J."/>
        </authorList>
    </citation>
    <scope>NUCLEOTIDE SEQUENCE [LARGE SCALE GENOMIC DNA]</scope>
    <source>
        <strain>ATCC BAA-854 / 0140J</strain>
    </source>
</reference>
<dbReference type="EC" id="3.6.4.-" evidence="1"/>
<dbReference type="EMBL" id="AM946015">
    <property type="protein sequence ID" value="CAR40423.1"/>
    <property type="molecule type" value="Genomic_DNA"/>
</dbReference>
<dbReference type="RefSeq" id="WP_012657625.1">
    <property type="nucleotide sequence ID" value="NC_012004.1"/>
</dbReference>
<dbReference type="SMR" id="B9DSU1"/>
<dbReference type="STRING" id="218495.SUB0059"/>
<dbReference type="GeneID" id="93825285"/>
<dbReference type="KEGG" id="sub:SUB0059"/>
<dbReference type="eggNOG" id="COG2255">
    <property type="taxonomic scope" value="Bacteria"/>
</dbReference>
<dbReference type="HOGENOM" id="CLU_055599_1_0_9"/>
<dbReference type="OrthoDB" id="9804478at2"/>
<dbReference type="Proteomes" id="UP000000449">
    <property type="component" value="Chromosome"/>
</dbReference>
<dbReference type="GO" id="GO:0005737">
    <property type="term" value="C:cytoplasm"/>
    <property type="evidence" value="ECO:0007669"/>
    <property type="project" value="UniProtKB-SubCell"/>
</dbReference>
<dbReference type="GO" id="GO:0048476">
    <property type="term" value="C:Holliday junction resolvase complex"/>
    <property type="evidence" value="ECO:0007669"/>
    <property type="project" value="UniProtKB-UniRule"/>
</dbReference>
<dbReference type="GO" id="GO:0005524">
    <property type="term" value="F:ATP binding"/>
    <property type="evidence" value="ECO:0007669"/>
    <property type="project" value="UniProtKB-UniRule"/>
</dbReference>
<dbReference type="GO" id="GO:0016887">
    <property type="term" value="F:ATP hydrolysis activity"/>
    <property type="evidence" value="ECO:0007669"/>
    <property type="project" value="InterPro"/>
</dbReference>
<dbReference type="GO" id="GO:0000400">
    <property type="term" value="F:four-way junction DNA binding"/>
    <property type="evidence" value="ECO:0007669"/>
    <property type="project" value="UniProtKB-UniRule"/>
</dbReference>
<dbReference type="GO" id="GO:0009378">
    <property type="term" value="F:four-way junction helicase activity"/>
    <property type="evidence" value="ECO:0007669"/>
    <property type="project" value="InterPro"/>
</dbReference>
<dbReference type="GO" id="GO:0006310">
    <property type="term" value="P:DNA recombination"/>
    <property type="evidence" value="ECO:0007669"/>
    <property type="project" value="UniProtKB-UniRule"/>
</dbReference>
<dbReference type="GO" id="GO:0006281">
    <property type="term" value="P:DNA repair"/>
    <property type="evidence" value="ECO:0007669"/>
    <property type="project" value="UniProtKB-UniRule"/>
</dbReference>
<dbReference type="CDD" id="cd00009">
    <property type="entry name" value="AAA"/>
    <property type="match status" value="1"/>
</dbReference>
<dbReference type="Gene3D" id="1.10.8.60">
    <property type="match status" value="1"/>
</dbReference>
<dbReference type="Gene3D" id="3.40.50.300">
    <property type="entry name" value="P-loop containing nucleotide triphosphate hydrolases"/>
    <property type="match status" value="1"/>
</dbReference>
<dbReference type="Gene3D" id="1.10.10.10">
    <property type="entry name" value="Winged helix-like DNA-binding domain superfamily/Winged helix DNA-binding domain"/>
    <property type="match status" value="1"/>
</dbReference>
<dbReference type="HAMAP" id="MF_00016">
    <property type="entry name" value="DNA_HJ_migration_RuvB"/>
    <property type="match status" value="1"/>
</dbReference>
<dbReference type="InterPro" id="IPR003593">
    <property type="entry name" value="AAA+_ATPase"/>
</dbReference>
<dbReference type="InterPro" id="IPR041445">
    <property type="entry name" value="AAA_lid_4"/>
</dbReference>
<dbReference type="InterPro" id="IPR004605">
    <property type="entry name" value="DNA_helicase_Holl-junc_RuvB"/>
</dbReference>
<dbReference type="InterPro" id="IPR027417">
    <property type="entry name" value="P-loop_NTPase"/>
</dbReference>
<dbReference type="InterPro" id="IPR008824">
    <property type="entry name" value="RuvB-like_N"/>
</dbReference>
<dbReference type="InterPro" id="IPR008823">
    <property type="entry name" value="RuvB_C"/>
</dbReference>
<dbReference type="InterPro" id="IPR036388">
    <property type="entry name" value="WH-like_DNA-bd_sf"/>
</dbReference>
<dbReference type="InterPro" id="IPR036390">
    <property type="entry name" value="WH_DNA-bd_sf"/>
</dbReference>
<dbReference type="NCBIfam" id="NF000868">
    <property type="entry name" value="PRK00080.1"/>
    <property type="match status" value="1"/>
</dbReference>
<dbReference type="NCBIfam" id="TIGR00635">
    <property type="entry name" value="ruvB"/>
    <property type="match status" value="1"/>
</dbReference>
<dbReference type="PANTHER" id="PTHR42848">
    <property type="match status" value="1"/>
</dbReference>
<dbReference type="PANTHER" id="PTHR42848:SF1">
    <property type="entry name" value="HOLLIDAY JUNCTION BRANCH MIGRATION COMPLEX SUBUNIT RUVB"/>
    <property type="match status" value="1"/>
</dbReference>
<dbReference type="Pfam" id="PF17864">
    <property type="entry name" value="AAA_lid_4"/>
    <property type="match status" value="1"/>
</dbReference>
<dbReference type="Pfam" id="PF05491">
    <property type="entry name" value="RuvB_C"/>
    <property type="match status" value="1"/>
</dbReference>
<dbReference type="Pfam" id="PF05496">
    <property type="entry name" value="RuvB_N"/>
    <property type="match status" value="1"/>
</dbReference>
<dbReference type="SMART" id="SM00382">
    <property type="entry name" value="AAA"/>
    <property type="match status" value="1"/>
</dbReference>
<dbReference type="SUPFAM" id="SSF52540">
    <property type="entry name" value="P-loop containing nucleoside triphosphate hydrolases"/>
    <property type="match status" value="1"/>
</dbReference>
<dbReference type="SUPFAM" id="SSF46785">
    <property type="entry name" value="Winged helix' DNA-binding domain"/>
    <property type="match status" value="1"/>
</dbReference>
<feature type="chain" id="PRO_1000116659" description="Holliday junction branch migration complex subunit RuvB">
    <location>
        <begin position="1"/>
        <end position="334"/>
    </location>
</feature>
<feature type="region of interest" description="Large ATPase domain (RuvB-L)" evidence="1">
    <location>
        <begin position="1"/>
        <end position="181"/>
    </location>
</feature>
<feature type="region of interest" description="Small ATPAse domain (RuvB-S)" evidence="1">
    <location>
        <begin position="182"/>
        <end position="252"/>
    </location>
</feature>
<feature type="region of interest" description="Head domain (RuvB-H)" evidence="1">
    <location>
        <begin position="255"/>
        <end position="334"/>
    </location>
</feature>
<feature type="binding site" evidence="1">
    <location>
        <position position="20"/>
    </location>
    <ligand>
        <name>ATP</name>
        <dbReference type="ChEBI" id="CHEBI:30616"/>
    </ligand>
</feature>
<feature type="binding site" evidence="1">
    <location>
        <position position="21"/>
    </location>
    <ligand>
        <name>ATP</name>
        <dbReference type="ChEBI" id="CHEBI:30616"/>
    </ligand>
</feature>
<feature type="binding site" evidence="1">
    <location>
        <position position="62"/>
    </location>
    <ligand>
        <name>ATP</name>
        <dbReference type="ChEBI" id="CHEBI:30616"/>
    </ligand>
</feature>
<feature type="binding site" evidence="1">
    <location>
        <position position="65"/>
    </location>
    <ligand>
        <name>ATP</name>
        <dbReference type="ChEBI" id="CHEBI:30616"/>
    </ligand>
</feature>
<feature type="binding site" evidence="1">
    <location>
        <position position="66"/>
    </location>
    <ligand>
        <name>ATP</name>
        <dbReference type="ChEBI" id="CHEBI:30616"/>
    </ligand>
</feature>
<feature type="binding site" evidence="1">
    <location>
        <position position="66"/>
    </location>
    <ligand>
        <name>Mg(2+)</name>
        <dbReference type="ChEBI" id="CHEBI:18420"/>
    </ligand>
</feature>
<feature type="binding site" evidence="1">
    <location>
        <position position="67"/>
    </location>
    <ligand>
        <name>ATP</name>
        <dbReference type="ChEBI" id="CHEBI:30616"/>
    </ligand>
</feature>
<feature type="binding site" evidence="1">
    <location>
        <begin position="128"/>
        <end position="130"/>
    </location>
    <ligand>
        <name>ATP</name>
        <dbReference type="ChEBI" id="CHEBI:30616"/>
    </ligand>
</feature>
<feature type="binding site" evidence="1">
    <location>
        <position position="171"/>
    </location>
    <ligand>
        <name>ATP</name>
        <dbReference type="ChEBI" id="CHEBI:30616"/>
    </ligand>
</feature>
<feature type="binding site" evidence="1">
    <location>
        <position position="181"/>
    </location>
    <ligand>
        <name>ATP</name>
        <dbReference type="ChEBI" id="CHEBI:30616"/>
    </ligand>
</feature>
<feature type="binding site" evidence="1">
    <location>
        <position position="218"/>
    </location>
    <ligand>
        <name>ATP</name>
        <dbReference type="ChEBI" id="CHEBI:30616"/>
    </ligand>
</feature>
<feature type="binding site" evidence="1">
    <location>
        <position position="291"/>
    </location>
    <ligand>
        <name>DNA</name>
        <dbReference type="ChEBI" id="CHEBI:16991"/>
    </ligand>
</feature>
<feature type="binding site" evidence="1">
    <location>
        <position position="310"/>
    </location>
    <ligand>
        <name>DNA</name>
        <dbReference type="ChEBI" id="CHEBI:16991"/>
    </ligand>
</feature>
<feature type="binding site" evidence="1">
    <location>
        <position position="312"/>
    </location>
    <ligand>
        <name>DNA</name>
        <dbReference type="ChEBI" id="CHEBI:16991"/>
    </ligand>
</feature>
<feature type="binding site" evidence="1">
    <location>
        <position position="315"/>
    </location>
    <ligand>
        <name>DNA</name>
        <dbReference type="ChEBI" id="CHEBI:16991"/>
    </ligand>
</feature>
<organism>
    <name type="scientific">Streptococcus uberis (strain ATCC BAA-854 / 0140J)</name>
    <dbReference type="NCBI Taxonomy" id="218495"/>
    <lineage>
        <taxon>Bacteria</taxon>
        <taxon>Bacillati</taxon>
        <taxon>Bacillota</taxon>
        <taxon>Bacilli</taxon>
        <taxon>Lactobacillales</taxon>
        <taxon>Streptococcaceae</taxon>
        <taxon>Streptococcus</taxon>
    </lineage>
</organism>
<name>RUVB_STRU0</name>
<proteinExistence type="inferred from homology"/>
<gene>
    <name evidence="1" type="primary">ruvB</name>
    <name type="ordered locus">SUB0059</name>
</gene>
<comment type="function">
    <text evidence="1">The RuvA-RuvB-RuvC complex processes Holliday junction (HJ) DNA during genetic recombination and DNA repair, while the RuvA-RuvB complex plays an important role in the rescue of blocked DNA replication forks via replication fork reversal (RFR). RuvA specifically binds to HJ cruciform DNA, conferring on it an open structure. The RuvB hexamer acts as an ATP-dependent pump, pulling dsDNA into and through the RuvAB complex. RuvB forms 2 homohexamers on either side of HJ DNA bound by 1 or 2 RuvA tetramers; 4 subunits per hexamer contact DNA at a time. Coordinated motions by a converter formed by DNA-disengaged RuvB subunits stimulates ATP hydrolysis and nucleotide exchange. Immobilization of the converter enables RuvB to convert the ATP-contained energy into a lever motion, pulling 2 nucleotides of DNA out of the RuvA tetramer per ATP hydrolyzed, thus driving DNA branch migration. The RuvB motors rotate together with the DNA substrate, which together with the progressing nucleotide cycle form the mechanistic basis for DNA recombination by continuous HJ branch migration. Branch migration allows RuvC to scan DNA until it finds its consensus sequence, where it cleaves and resolves cruciform DNA.</text>
</comment>
<comment type="catalytic activity">
    <reaction evidence="1">
        <text>ATP + H2O = ADP + phosphate + H(+)</text>
        <dbReference type="Rhea" id="RHEA:13065"/>
        <dbReference type="ChEBI" id="CHEBI:15377"/>
        <dbReference type="ChEBI" id="CHEBI:15378"/>
        <dbReference type="ChEBI" id="CHEBI:30616"/>
        <dbReference type="ChEBI" id="CHEBI:43474"/>
        <dbReference type="ChEBI" id="CHEBI:456216"/>
    </reaction>
</comment>
<comment type="subunit">
    <text evidence="1">Homohexamer. Forms an RuvA(8)-RuvB(12)-Holliday junction (HJ) complex. HJ DNA is sandwiched between 2 RuvA tetramers; dsDNA enters through RuvA and exits via RuvB. An RuvB hexamer assembles on each DNA strand where it exits the tetramer. Each RuvB hexamer is contacted by two RuvA subunits (via domain III) on 2 adjacent RuvB subunits; this complex drives branch migration. In the full resolvosome a probable DNA-RuvA(4)-RuvB(12)-RuvC(2) complex forms which resolves the HJ.</text>
</comment>
<comment type="subcellular location">
    <subcellularLocation>
        <location evidence="1">Cytoplasm</location>
    </subcellularLocation>
</comment>
<comment type="domain">
    <text evidence="1">Has 3 domains, the large (RuvB-L) and small ATPase (RuvB-S) domains and the C-terminal head (RuvB-H) domain. The head domain binds DNA, while the ATPase domains jointly bind ATP, ADP or are empty depending on the state of the subunit in the translocation cycle. During a single DNA translocation step the structure of each domain remains the same, but their relative positions change.</text>
</comment>
<comment type="similarity">
    <text evidence="1">Belongs to the RuvB family.</text>
</comment>
<accession>B9DSU1</accession>
<protein>
    <recommendedName>
        <fullName evidence="1">Holliday junction branch migration complex subunit RuvB</fullName>
        <ecNumber evidence="1">3.6.4.-</ecNumber>
    </recommendedName>
</protein>
<keyword id="KW-0067">ATP-binding</keyword>
<keyword id="KW-0963">Cytoplasm</keyword>
<keyword id="KW-0227">DNA damage</keyword>
<keyword id="KW-0233">DNA recombination</keyword>
<keyword id="KW-0234">DNA repair</keyword>
<keyword id="KW-0238">DNA-binding</keyword>
<keyword id="KW-0378">Hydrolase</keyword>
<keyword id="KW-0547">Nucleotide-binding</keyword>
<keyword id="KW-1185">Reference proteome</keyword>